<accession>Q3A1E3</accession>
<reference key="1">
    <citation type="submission" date="2005-10" db="EMBL/GenBank/DDBJ databases">
        <title>Complete sequence of Pelobacter carbinolicus DSM 2380.</title>
        <authorList>
            <person name="Copeland A."/>
            <person name="Lucas S."/>
            <person name="Lapidus A."/>
            <person name="Barry K."/>
            <person name="Detter J.C."/>
            <person name="Glavina T."/>
            <person name="Hammon N."/>
            <person name="Israni S."/>
            <person name="Pitluck S."/>
            <person name="Chertkov O."/>
            <person name="Schmutz J."/>
            <person name="Larimer F."/>
            <person name="Land M."/>
            <person name="Kyrpides N."/>
            <person name="Ivanova N."/>
            <person name="Richardson P."/>
        </authorList>
    </citation>
    <scope>NUCLEOTIDE SEQUENCE [LARGE SCALE GENOMIC DNA]</scope>
    <source>
        <strain>DSM 2380 / NBRC 103641 / GraBd1</strain>
    </source>
</reference>
<evidence type="ECO:0000255" key="1">
    <source>
        <dbReference type="HAMAP-Rule" id="MF_00658"/>
    </source>
</evidence>
<protein>
    <recommendedName>
        <fullName evidence="1">Ribosomal RNA large subunit methyltransferase H</fullName>
        <ecNumber evidence="1">2.1.1.177</ecNumber>
    </recommendedName>
    <alternativeName>
        <fullName evidence="1">23S rRNA (pseudouridine1915-N3)-methyltransferase</fullName>
    </alternativeName>
    <alternativeName>
        <fullName evidence="1">23S rRNA m3Psi1915 methyltransferase</fullName>
    </alternativeName>
    <alternativeName>
        <fullName evidence="1">rRNA (pseudouridine-N3-)-methyltransferase RlmH</fullName>
    </alternativeName>
</protein>
<dbReference type="EC" id="2.1.1.177" evidence="1"/>
<dbReference type="EMBL" id="CP000142">
    <property type="protein sequence ID" value="ABA89814.1"/>
    <property type="molecule type" value="Genomic_DNA"/>
</dbReference>
<dbReference type="RefSeq" id="WP_011342352.1">
    <property type="nucleotide sequence ID" value="NC_007498.2"/>
</dbReference>
<dbReference type="SMR" id="Q3A1E3"/>
<dbReference type="STRING" id="338963.Pcar_2576"/>
<dbReference type="KEGG" id="pca:Pcar_2576"/>
<dbReference type="eggNOG" id="COG1576">
    <property type="taxonomic scope" value="Bacteria"/>
</dbReference>
<dbReference type="HOGENOM" id="CLU_100552_0_0_7"/>
<dbReference type="OrthoDB" id="9806643at2"/>
<dbReference type="Proteomes" id="UP000002534">
    <property type="component" value="Chromosome"/>
</dbReference>
<dbReference type="GO" id="GO:0005737">
    <property type="term" value="C:cytoplasm"/>
    <property type="evidence" value="ECO:0007669"/>
    <property type="project" value="UniProtKB-SubCell"/>
</dbReference>
<dbReference type="GO" id="GO:0070038">
    <property type="term" value="F:rRNA (pseudouridine-N3-)-methyltransferase activity"/>
    <property type="evidence" value="ECO:0007669"/>
    <property type="project" value="UniProtKB-UniRule"/>
</dbReference>
<dbReference type="CDD" id="cd18081">
    <property type="entry name" value="RlmH-like"/>
    <property type="match status" value="1"/>
</dbReference>
<dbReference type="Gene3D" id="3.40.1280.10">
    <property type="match status" value="1"/>
</dbReference>
<dbReference type="HAMAP" id="MF_00658">
    <property type="entry name" value="23SrRNA_methyltr_H"/>
    <property type="match status" value="1"/>
</dbReference>
<dbReference type="InterPro" id="IPR029028">
    <property type="entry name" value="Alpha/beta_knot_MTases"/>
</dbReference>
<dbReference type="InterPro" id="IPR003742">
    <property type="entry name" value="RlmH-like"/>
</dbReference>
<dbReference type="InterPro" id="IPR029026">
    <property type="entry name" value="tRNA_m1G_MTases_N"/>
</dbReference>
<dbReference type="NCBIfam" id="NF000986">
    <property type="entry name" value="PRK00103.1-4"/>
    <property type="match status" value="1"/>
</dbReference>
<dbReference type="PANTHER" id="PTHR33603">
    <property type="entry name" value="METHYLTRANSFERASE"/>
    <property type="match status" value="1"/>
</dbReference>
<dbReference type="PANTHER" id="PTHR33603:SF1">
    <property type="entry name" value="RIBOSOMAL RNA LARGE SUBUNIT METHYLTRANSFERASE H"/>
    <property type="match status" value="1"/>
</dbReference>
<dbReference type="Pfam" id="PF02590">
    <property type="entry name" value="SPOUT_MTase"/>
    <property type="match status" value="1"/>
</dbReference>
<dbReference type="PIRSF" id="PIRSF004505">
    <property type="entry name" value="MT_bac"/>
    <property type="match status" value="1"/>
</dbReference>
<dbReference type="SUPFAM" id="SSF75217">
    <property type="entry name" value="alpha/beta knot"/>
    <property type="match status" value="1"/>
</dbReference>
<comment type="function">
    <text evidence="1">Specifically methylates the pseudouridine at position 1915 (m3Psi1915) in 23S rRNA.</text>
</comment>
<comment type="catalytic activity">
    <reaction evidence="1">
        <text>pseudouridine(1915) in 23S rRNA + S-adenosyl-L-methionine = N(3)-methylpseudouridine(1915) in 23S rRNA + S-adenosyl-L-homocysteine + H(+)</text>
        <dbReference type="Rhea" id="RHEA:42752"/>
        <dbReference type="Rhea" id="RHEA-COMP:10221"/>
        <dbReference type="Rhea" id="RHEA-COMP:10222"/>
        <dbReference type="ChEBI" id="CHEBI:15378"/>
        <dbReference type="ChEBI" id="CHEBI:57856"/>
        <dbReference type="ChEBI" id="CHEBI:59789"/>
        <dbReference type="ChEBI" id="CHEBI:65314"/>
        <dbReference type="ChEBI" id="CHEBI:74486"/>
        <dbReference type="EC" id="2.1.1.177"/>
    </reaction>
</comment>
<comment type="subunit">
    <text evidence="1">Homodimer.</text>
</comment>
<comment type="subcellular location">
    <subcellularLocation>
        <location evidence="1">Cytoplasm</location>
    </subcellularLocation>
</comment>
<comment type="similarity">
    <text evidence="1">Belongs to the RNA methyltransferase RlmH family.</text>
</comment>
<feature type="chain" id="PRO_0000260580" description="Ribosomal RNA large subunit methyltransferase H">
    <location>
        <begin position="1"/>
        <end position="156"/>
    </location>
</feature>
<feature type="binding site" evidence="1">
    <location>
        <position position="72"/>
    </location>
    <ligand>
        <name>S-adenosyl-L-methionine</name>
        <dbReference type="ChEBI" id="CHEBI:59789"/>
    </ligand>
</feature>
<feature type="binding site" evidence="1">
    <location>
        <position position="104"/>
    </location>
    <ligand>
        <name>S-adenosyl-L-methionine</name>
        <dbReference type="ChEBI" id="CHEBI:59789"/>
    </ligand>
</feature>
<feature type="binding site" evidence="1">
    <location>
        <begin position="123"/>
        <end position="128"/>
    </location>
    <ligand>
        <name>S-adenosyl-L-methionine</name>
        <dbReference type="ChEBI" id="CHEBI:59789"/>
    </ligand>
</feature>
<sequence>MKICLLCVGRLSIGYLREGAADFEARLQRYLPVRIVELKEEKSGKNDAEYIRRQEGRRILEKIPAGSFVIALDERGRSVSSEKLAALLERHMMESTPELTLIIGGAYGLCDEVKQRADMLMSLSEMTLTHQMARLVLLEQLYRGFTIVRNEPYHNR</sequence>
<proteinExistence type="inferred from homology"/>
<name>RLMH_SYNC1</name>
<organism>
    <name type="scientific">Syntrophotalea carbinolica (strain DSM 2380 / NBRC 103641 / GraBd1)</name>
    <name type="common">Pelobacter carbinolicus</name>
    <dbReference type="NCBI Taxonomy" id="338963"/>
    <lineage>
        <taxon>Bacteria</taxon>
        <taxon>Pseudomonadati</taxon>
        <taxon>Thermodesulfobacteriota</taxon>
        <taxon>Desulfuromonadia</taxon>
        <taxon>Desulfuromonadales</taxon>
        <taxon>Syntrophotaleaceae</taxon>
        <taxon>Syntrophotalea</taxon>
    </lineage>
</organism>
<gene>
    <name evidence="1" type="primary">rlmH</name>
    <name type="ordered locus">Pcar_2576</name>
</gene>
<keyword id="KW-0963">Cytoplasm</keyword>
<keyword id="KW-0489">Methyltransferase</keyword>
<keyword id="KW-1185">Reference proteome</keyword>
<keyword id="KW-0698">rRNA processing</keyword>
<keyword id="KW-0949">S-adenosyl-L-methionine</keyword>
<keyword id="KW-0808">Transferase</keyword>